<comment type="function">
    <text evidence="1">Catalyzes the reduction of the glycolytic intermediate dihydroxyacetone phosphate (DHAP) to sn-glycerol 3-phosphate (G3P), the key precursor for phospholipid synthesis.</text>
</comment>
<comment type="catalytic activity">
    <reaction evidence="1">
        <text>sn-glycerol 3-phosphate + NAD(+) = dihydroxyacetone phosphate + NADH + H(+)</text>
        <dbReference type="Rhea" id="RHEA:11092"/>
        <dbReference type="ChEBI" id="CHEBI:15378"/>
        <dbReference type="ChEBI" id="CHEBI:57540"/>
        <dbReference type="ChEBI" id="CHEBI:57597"/>
        <dbReference type="ChEBI" id="CHEBI:57642"/>
        <dbReference type="ChEBI" id="CHEBI:57945"/>
        <dbReference type="EC" id="1.1.1.94"/>
    </reaction>
    <physiologicalReaction direction="right-to-left" evidence="1">
        <dbReference type="Rhea" id="RHEA:11094"/>
    </physiologicalReaction>
</comment>
<comment type="catalytic activity">
    <reaction evidence="1">
        <text>sn-glycerol 3-phosphate + NADP(+) = dihydroxyacetone phosphate + NADPH + H(+)</text>
        <dbReference type="Rhea" id="RHEA:11096"/>
        <dbReference type="ChEBI" id="CHEBI:15378"/>
        <dbReference type="ChEBI" id="CHEBI:57597"/>
        <dbReference type="ChEBI" id="CHEBI:57642"/>
        <dbReference type="ChEBI" id="CHEBI:57783"/>
        <dbReference type="ChEBI" id="CHEBI:58349"/>
        <dbReference type="EC" id="1.1.1.94"/>
    </reaction>
    <physiologicalReaction direction="right-to-left" evidence="1">
        <dbReference type="Rhea" id="RHEA:11098"/>
    </physiologicalReaction>
</comment>
<comment type="pathway">
    <text evidence="1">Membrane lipid metabolism; glycerophospholipid metabolism.</text>
</comment>
<comment type="subcellular location">
    <subcellularLocation>
        <location evidence="1">Cytoplasm</location>
    </subcellularLocation>
</comment>
<comment type="similarity">
    <text evidence="1">Belongs to the NAD-dependent glycerol-3-phosphate dehydrogenase family.</text>
</comment>
<dbReference type="EC" id="1.1.1.94" evidence="1"/>
<dbReference type="EMBL" id="BX248357">
    <property type="protein sequence ID" value="CAE49650.1"/>
    <property type="molecule type" value="Genomic_DNA"/>
</dbReference>
<dbReference type="RefSeq" id="WP_010934824.1">
    <property type="nucleotide sequence ID" value="NC_002935.2"/>
</dbReference>
<dbReference type="SMR" id="P61738"/>
<dbReference type="STRING" id="257309.DIP1130"/>
<dbReference type="KEGG" id="cdi:DIP1130"/>
<dbReference type="HOGENOM" id="CLU_033449_0_2_11"/>
<dbReference type="UniPathway" id="UPA00940"/>
<dbReference type="Proteomes" id="UP000002198">
    <property type="component" value="Chromosome"/>
</dbReference>
<dbReference type="GO" id="GO:0005829">
    <property type="term" value="C:cytosol"/>
    <property type="evidence" value="ECO:0007669"/>
    <property type="project" value="TreeGrafter"/>
</dbReference>
<dbReference type="GO" id="GO:0047952">
    <property type="term" value="F:glycerol-3-phosphate dehydrogenase [NAD(P)+] activity"/>
    <property type="evidence" value="ECO:0007669"/>
    <property type="project" value="UniProtKB-UniRule"/>
</dbReference>
<dbReference type="GO" id="GO:0051287">
    <property type="term" value="F:NAD binding"/>
    <property type="evidence" value="ECO:0007669"/>
    <property type="project" value="InterPro"/>
</dbReference>
<dbReference type="GO" id="GO:0005975">
    <property type="term" value="P:carbohydrate metabolic process"/>
    <property type="evidence" value="ECO:0007669"/>
    <property type="project" value="InterPro"/>
</dbReference>
<dbReference type="GO" id="GO:0046167">
    <property type="term" value="P:glycerol-3-phosphate biosynthetic process"/>
    <property type="evidence" value="ECO:0007669"/>
    <property type="project" value="UniProtKB-UniRule"/>
</dbReference>
<dbReference type="GO" id="GO:0046168">
    <property type="term" value="P:glycerol-3-phosphate catabolic process"/>
    <property type="evidence" value="ECO:0007669"/>
    <property type="project" value="InterPro"/>
</dbReference>
<dbReference type="GO" id="GO:0006650">
    <property type="term" value="P:glycerophospholipid metabolic process"/>
    <property type="evidence" value="ECO:0007669"/>
    <property type="project" value="UniProtKB-UniRule"/>
</dbReference>
<dbReference type="GO" id="GO:0008654">
    <property type="term" value="P:phospholipid biosynthetic process"/>
    <property type="evidence" value="ECO:0007669"/>
    <property type="project" value="UniProtKB-KW"/>
</dbReference>
<dbReference type="FunFam" id="1.10.1040.10:FF:000001">
    <property type="entry name" value="Glycerol-3-phosphate dehydrogenase [NAD(P)+]"/>
    <property type="match status" value="1"/>
</dbReference>
<dbReference type="FunFam" id="3.40.50.720:FF:000019">
    <property type="entry name" value="Glycerol-3-phosphate dehydrogenase [NAD(P)+]"/>
    <property type="match status" value="1"/>
</dbReference>
<dbReference type="Gene3D" id="1.10.1040.10">
    <property type="entry name" value="N-(1-d-carboxylethyl)-l-norvaline Dehydrogenase, domain 2"/>
    <property type="match status" value="1"/>
</dbReference>
<dbReference type="Gene3D" id="3.40.50.720">
    <property type="entry name" value="NAD(P)-binding Rossmann-like Domain"/>
    <property type="match status" value="1"/>
</dbReference>
<dbReference type="HAMAP" id="MF_00394">
    <property type="entry name" value="NAD_Glyc3P_dehydrog"/>
    <property type="match status" value="1"/>
</dbReference>
<dbReference type="InterPro" id="IPR008927">
    <property type="entry name" value="6-PGluconate_DH-like_C_sf"/>
</dbReference>
<dbReference type="InterPro" id="IPR013328">
    <property type="entry name" value="6PGD_dom2"/>
</dbReference>
<dbReference type="InterPro" id="IPR006168">
    <property type="entry name" value="G3P_DH_NAD-dep"/>
</dbReference>
<dbReference type="InterPro" id="IPR006109">
    <property type="entry name" value="G3P_DH_NAD-dep_C"/>
</dbReference>
<dbReference type="InterPro" id="IPR011128">
    <property type="entry name" value="G3P_DH_NAD-dep_N"/>
</dbReference>
<dbReference type="InterPro" id="IPR036291">
    <property type="entry name" value="NAD(P)-bd_dom_sf"/>
</dbReference>
<dbReference type="NCBIfam" id="NF000940">
    <property type="entry name" value="PRK00094.1-2"/>
    <property type="match status" value="1"/>
</dbReference>
<dbReference type="NCBIfam" id="NF000942">
    <property type="entry name" value="PRK00094.1-4"/>
    <property type="match status" value="1"/>
</dbReference>
<dbReference type="PANTHER" id="PTHR11728">
    <property type="entry name" value="GLYCEROL-3-PHOSPHATE DEHYDROGENASE"/>
    <property type="match status" value="1"/>
</dbReference>
<dbReference type="PANTHER" id="PTHR11728:SF1">
    <property type="entry name" value="GLYCEROL-3-PHOSPHATE DEHYDROGENASE [NAD(+)] 2, CHLOROPLASTIC"/>
    <property type="match status" value="1"/>
</dbReference>
<dbReference type="Pfam" id="PF07479">
    <property type="entry name" value="NAD_Gly3P_dh_C"/>
    <property type="match status" value="1"/>
</dbReference>
<dbReference type="Pfam" id="PF01210">
    <property type="entry name" value="NAD_Gly3P_dh_N"/>
    <property type="match status" value="1"/>
</dbReference>
<dbReference type="PIRSF" id="PIRSF000114">
    <property type="entry name" value="Glycerol-3-P_dh"/>
    <property type="match status" value="1"/>
</dbReference>
<dbReference type="PRINTS" id="PR00077">
    <property type="entry name" value="GPDHDRGNASE"/>
</dbReference>
<dbReference type="SUPFAM" id="SSF48179">
    <property type="entry name" value="6-phosphogluconate dehydrogenase C-terminal domain-like"/>
    <property type="match status" value="1"/>
</dbReference>
<dbReference type="SUPFAM" id="SSF51735">
    <property type="entry name" value="NAD(P)-binding Rossmann-fold domains"/>
    <property type="match status" value="1"/>
</dbReference>
<dbReference type="PROSITE" id="PS00957">
    <property type="entry name" value="NAD_G3PDH"/>
    <property type="match status" value="1"/>
</dbReference>
<organism>
    <name type="scientific">Corynebacterium diphtheriae (strain ATCC 700971 / NCTC 13129 / Biotype gravis)</name>
    <dbReference type="NCBI Taxonomy" id="257309"/>
    <lineage>
        <taxon>Bacteria</taxon>
        <taxon>Bacillati</taxon>
        <taxon>Actinomycetota</taxon>
        <taxon>Actinomycetes</taxon>
        <taxon>Mycobacteriales</taxon>
        <taxon>Corynebacteriaceae</taxon>
        <taxon>Corynebacterium</taxon>
    </lineage>
</organism>
<name>GPDA_CORDI</name>
<feature type="chain" id="PRO_0000137950" description="Glycerol-3-phosphate dehydrogenase [NAD(P)+]">
    <location>
        <begin position="1"/>
        <end position="331"/>
    </location>
</feature>
<feature type="active site" description="Proton acceptor" evidence="1">
    <location>
        <position position="190"/>
    </location>
</feature>
<feature type="binding site" evidence="1">
    <location>
        <position position="10"/>
    </location>
    <ligand>
        <name>NADPH</name>
        <dbReference type="ChEBI" id="CHEBI:57783"/>
    </ligand>
</feature>
<feature type="binding site" evidence="1">
    <location>
        <position position="11"/>
    </location>
    <ligand>
        <name>NADPH</name>
        <dbReference type="ChEBI" id="CHEBI:57783"/>
    </ligand>
</feature>
<feature type="binding site" evidence="1">
    <location>
        <position position="31"/>
    </location>
    <ligand>
        <name>NADPH</name>
        <dbReference type="ChEBI" id="CHEBI:57783"/>
    </ligand>
</feature>
<feature type="binding site" evidence="1">
    <location>
        <position position="32"/>
    </location>
    <ligand>
        <name>NADPH</name>
        <dbReference type="ChEBI" id="CHEBI:57783"/>
    </ligand>
</feature>
<feature type="binding site" evidence="1">
    <location>
        <position position="105"/>
    </location>
    <ligand>
        <name>NADPH</name>
        <dbReference type="ChEBI" id="CHEBI:57783"/>
    </ligand>
</feature>
<feature type="binding site" evidence="1">
    <location>
        <position position="105"/>
    </location>
    <ligand>
        <name>sn-glycerol 3-phosphate</name>
        <dbReference type="ChEBI" id="CHEBI:57597"/>
    </ligand>
</feature>
<feature type="binding site" evidence="1">
    <location>
        <position position="135"/>
    </location>
    <ligand>
        <name>sn-glycerol 3-phosphate</name>
        <dbReference type="ChEBI" id="CHEBI:57597"/>
    </ligand>
</feature>
<feature type="binding site" evidence="1">
    <location>
        <position position="139"/>
    </location>
    <ligand>
        <name>NADPH</name>
        <dbReference type="ChEBI" id="CHEBI:57783"/>
    </ligand>
</feature>
<feature type="binding site" evidence="1">
    <location>
        <position position="190"/>
    </location>
    <ligand>
        <name>sn-glycerol 3-phosphate</name>
        <dbReference type="ChEBI" id="CHEBI:57597"/>
    </ligand>
</feature>
<feature type="binding site" evidence="1">
    <location>
        <position position="243"/>
    </location>
    <ligand>
        <name>sn-glycerol 3-phosphate</name>
        <dbReference type="ChEBI" id="CHEBI:57597"/>
    </ligand>
</feature>
<feature type="binding site" evidence="1">
    <location>
        <position position="253"/>
    </location>
    <ligand>
        <name>sn-glycerol 3-phosphate</name>
        <dbReference type="ChEBI" id="CHEBI:57597"/>
    </ligand>
</feature>
<feature type="binding site" evidence="1">
    <location>
        <position position="254"/>
    </location>
    <ligand>
        <name>NADPH</name>
        <dbReference type="ChEBI" id="CHEBI:57783"/>
    </ligand>
</feature>
<feature type="binding site" evidence="1">
    <location>
        <position position="254"/>
    </location>
    <ligand>
        <name>sn-glycerol 3-phosphate</name>
        <dbReference type="ChEBI" id="CHEBI:57597"/>
    </ligand>
</feature>
<feature type="binding site" evidence="1">
    <location>
        <position position="255"/>
    </location>
    <ligand>
        <name>sn-glycerol 3-phosphate</name>
        <dbReference type="ChEBI" id="CHEBI:57597"/>
    </ligand>
</feature>
<feature type="binding site" evidence="1">
    <location>
        <position position="279"/>
    </location>
    <ligand>
        <name>NADPH</name>
        <dbReference type="ChEBI" id="CHEBI:57783"/>
    </ligand>
</feature>
<feature type="binding site" evidence="1">
    <location>
        <position position="281"/>
    </location>
    <ligand>
        <name>NADPH</name>
        <dbReference type="ChEBI" id="CHEBI:57783"/>
    </ligand>
</feature>
<keyword id="KW-0963">Cytoplasm</keyword>
<keyword id="KW-0444">Lipid biosynthesis</keyword>
<keyword id="KW-0443">Lipid metabolism</keyword>
<keyword id="KW-0520">NAD</keyword>
<keyword id="KW-0521">NADP</keyword>
<keyword id="KW-0547">Nucleotide-binding</keyword>
<keyword id="KW-0560">Oxidoreductase</keyword>
<keyword id="KW-0594">Phospholipid biosynthesis</keyword>
<keyword id="KW-1208">Phospholipid metabolism</keyword>
<keyword id="KW-1185">Reference proteome</keyword>
<proteinExistence type="inferred from homology"/>
<sequence length="331" mass="34706">MKIGVMGAGSWGTTLAKVFSDAGCDVTLWARREEVAREINTEHTNSTYLRGIALPHTLTATTQPTQALCDADVVVLAVPSQTLRGNLAEWCADIPQDALLLSLAKGIEKETFLRMSEVIAEVTGAQPDKVAVLSGPNLAREIAEEQPAATVIACTNEKNAQRIQHALAAPYFRPYTNTDVIGCEIGGACKNVIALACGMASGRGLGENTLATLMTRGLAEISRLGVAMGADPRTLSGLAGLGDLVATCSSPLSRNRTFGARLGEGKTLDEARAATNGQVAEGVISSQSIARLADSLGVDMPITRAVFGVCHRDQNVADMVAALMGRTKKSE</sequence>
<evidence type="ECO:0000255" key="1">
    <source>
        <dbReference type="HAMAP-Rule" id="MF_00394"/>
    </source>
</evidence>
<reference key="1">
    <citation type="journal article" date="2003" name="Nucleic Acids Res.">
        <title>The complete genome sequence and analysis of Corynebacterium diphtheriae NCTC13129.</title>
        <authorList>
            <person name="Cerdeno-Tarraga A.-M."/>
            <person name="Efstratiou A."/>
            <person name="Dover L.G."/>
            <person name="Holden M.T.G."/>
            <person name="Pallen M.J."/>
            <person name="Bentley S.D."/>
            <person name="Besra G.S."/>
            <person name="Churcher C.M."/>
            <person name="James K.D."/>
            <person name="De Zoysa A."/>
            <person name="Chillingworth T."/>
            <person name="Cronin A."/>
            <person name="Dowd L."/>
            <person name="Feltwell T."/>
            <person name="Hamlin N."/>
            <person name="Holroyd S."/>
            <person name="Jagels K."/>
            <person name="Moule S."/>
            <person name="Quail M.A."/>
            <person name="Rabbinowitsch E."/>
            <person name="Rutherford K.M."/>
            <person name="Thomson N.R."/>
            <person name="Unwin L."/>
            <person name="Whitehead S."/>
            <person name="Barrell B.G."/>
            <person name="Parkhill J."/>
        </authorList>
    </citation>
    <scope>NUCLEOTIDE SEQUENCE [LARGE SCALE GENOMIC DNA]</scope>
    <source>
        <strain>ATCC 700971 / NCTC 13129 / Biotype gravis</strain>
    </source>
</reference>
<gene>
    <name evidence="1" type="primary">gpsA</name>
    <name type="ordered locus">DIP1130</name>
</gene>
<accession>P61738</accession>
<protein>
    <recommendedName>
        <fullName evidence="1">Glycerol-3-phosphate dehydrogenase [NAD(P)+]</fullName>
        <ecNumber evidence="1">1.1.1.94</ecNumber>
    </recommendedName>
    <alternativeName>
        <fullName evidence="1">NAD(P)(+)-dependent glycerol-3-phosphate dehydrogenase</fullName>
    </alternativeName>
    <alternativeName>
        <fullName evidence="1">NAD(P)H-dependent dihydroxyacetone-phosphate reductase</fullName>
    </alternativeName>
</protein>